<accession>P0DOF9</accession>
<accession>P03483</accession>
<accession>Q1K9D9</accession>
<sequence length="469" mass="52147">MNPNQKIITIGSVSLTIATICFLMQIAIQVTTVTLHFKQYECDSPANNQVMPCEPIIIERNITEIVYLTNTTIEKEICPKLVEYRNWSKPQCKITGFAPFSKDNSIRLSAGGDIWVTREPYVSCDPGKCYQFALGQGTTLDNKHSNDTIHDRTPHRTLLMNELGVPFHLGTRQVCIGWSSSSCHDGKAWLHVCVTGYDKNATASFIYDGRLVDSIGSWSQNILRTQESECVCINGTCTVVMTDGSASGRADTKILFIEEGKIVHISPLSGSAQHVEECSCYPRYPGVRCICRDNWKGSNRPVVDINVKDYSIDSSYVCSGLVGDTPRNNDRSSNSYCRNPNNEKGNHGVKGWAFDDGNDVWMGRTISEDSRSGYETFKVIGGWSTPNSKLQINRQVIVDSDNRSGYSGIFSVEGKSCINRCFYVELIRGREQETRVWWTSNSIVVFCGTSGTYGTGSWPDGADINLMPI</sequence>
<dbReference type="EC" id="3.2.1.18" evidence="1"/>
<dbReference type="EMBL" id="J02168">
    <property type="protein sequence ID" value="AAA43419.1"/>
    <property type="molecule type" value="Genomic_RNA"/>
</dbReference>
<dbReference type="SMR" id="P0DOF9"/>
<dbReference type="ChEMBL" id="CHEMBL2046263"/>
<dbReference type="DrugCentral" id="P0DOF9"/>
<dbReference type="GlyCosmos" id="P0DOF9">
    <property type="glycosylation" value="7 sites, No reported glycans"/>
</dbReference>
<dbReference type="Proteomes" id="UP000171580">
    <property type="component" value="Genome"/>
</dbReference>
<dbReference type="GO" id="GO:0020002">
    <property type="term" value="C:host cell plasma membrane"/>
    <property type="evidence" value="ECO:0007669"/>
    <property type="project" value="UniProtKB-SubCell"/>
</dbReference>
<dbReference type="GO" id="GO:0016020">
    <property type="term" value="C:membrane"/>
    <property type="evidence" value="ECO:0007669"/>
    <property type="project" value="UniProtKB-UniRule"/>
</dbReference>
<dbReference type="GO" id="GO:0055036">
    <property type="term" value="C:virion membrane"/>
    <property type="evidence" value="ECO:0007669"/>
    <property type="project" value="UniProtKB-SubCell"/>
</dbReference>
<dbReference type="GO" id="GO:0004308">
    <property type="term" value="F:exo-alpha-sialidase activity"/>
    <property type="evidence" value="ECO:0007669"/>
    <property type="project" value="UniProtKB-UniRule"/>
</dbReference>
<dbReference type="GO" id="GO:0046872">
    <property type="term" value="F:metal ion binding"/>
    <property type="evidence" value="ECO:0007669"/>
    <property type="project" value="UniProtKB-UniRule"/>
</dbReference>
<dbReference type="GO" id="GO:0005975">
    <property type="term" value="P:carbohydrate metabolic process"/>
    <property type="evidence" value="ECO:0007669"/>
    <property type="project" value="InterPro"/>
</dbReference>
<dbReference type="GO" id="GO:0046761">
    <property type="term" value="P:viral budding from plasma membrane"/>
    <property type="evidence" value="ECO:0007669"/>
    <property type="project" value="UniProtKB-UniRule"/>
</dbReference>
<dbReference type="CDD" id="cd15483">
    <property type="entry name" value="Influenza_NA"/>
    <property type="match status" value="1"/>
</dbReference>
<dbReference type="Gene3D" id="2.120.10.10">
    <property type="match status" value="1"/>
</dbReference>
<dbReference type="HAMAP" id="MF_04071">
    <property type="entry name" value="INFV_NRAM"/>
    <property type="match status" value="1"/>
</dbReference>
<dbReference type="InterPro" id="IPR001860">
    <property type="entry name" value="Glyco_hydro_34"/>
</dbReference>
<dbReference type="InterPro" id="IPR033654">
    <property type="entry name" value="Sialidase_Influenza_A/B"/>
</dbReference>
<dbReference type="InterPro" id="IPR036278">
    <property type="entry name" value="Sialidase_sf"/>
</dbReference>
<dbReference type="Pfam" id="PF00064">
    <property type="entry name" value="Neur"/>
    <property type="match status" value="1"/>
</dbReference>
<dbReference type="SUPFAM" id="SSF50939">
    <property type="entry name" value="Sialidases"/>
    <property type="match status" value="1"/>
</dbReference>
<comment type="function">
    <text evidence="1">Catalyzes the removal of terminal sialic acid residues from viral and cellular glycoconjugates. Cleaves off the terminal sialic acids on the glycosylated HA during virus budding to facilitate virus release. Additionally helps virus spread through the circulation by further removing sialic acids from the cell surface. These cleavages prevent self-aggregation and ensure the efficient spread of the progeny virus from cell to cell. Otherwise, infection would be limited to one round of replication. Described as a receptor-destroying enzyme because it cleaves a terminal sialic acid from the cellular receptors. May facilitate viral invasion of the upper airways by cleaving the sialic acid moieties on the mucin of the airway epithelial cells. Likely to plays a role in the budding process through its association with lipid rafts during intracellular transport. May additionally display a raft-association independent effect on budding. Plays a role in the determination of host range restriction on replication and virulence. Sialidase activity in late endosome/lysosome traffic seems to enhance virus replication.</text>
</comment>
<comment type="catalytic activity">
    <reaction evidence="1">
        <text>Hydrolysis of alpha-(2-&gt;3)-, alpha-(2-&gt;6)-, alpha-(2-&gt;8)- glycosidic linkages of terminal sialic acid residues in oligosaccharides, glycoproteins, glycolipids, colominic acid and synthetic substrates.</text>
        <dbReference type="EC" id="3.2.1.18"/>
    </reaction>
</comment>
<comment type="cofactor">
    <cofactor evidence="1">
        <name>Ca(2+)</name>
        <dbReference type="ChEBI" id="CHEBI:29108"/>
    </cofactor>
</comment>
<comment type="activity regulation">
    <text evidence="1">Inhibited by the neuraminidase inhibitors zanamivir (Relenza) and oseltamivir (Tamiflu). These drugs interfere with the release of progeny virus from infected cells and are effective against all influenza strains. Resistance to neuraminidase inhibitors is quite rare.</text>
</comment>
<comment type="subunit">
    <text evidence="1">Homotetramer.</text>
</comment>
<comment type="subcellular location">
    <subcellularLocation>
        <location evidence="1">Virion membrane</location>
    </subcellularLocation>
    <subcellularLocation>
        <location evidence="1">Host apical cell membrane</location>
        <topology evidence="1">Single-pass type II membrane protein</topology>
    </subcellularLocation>
    <text evidence="1">Preferentially accumulates at the apical plasma membrane in infected polarized epithelial cells, which is the virus assembly site. Uses lipid rafts for cell surface transport and apical sorting. In the virion, forms a mushroom-shaped spike on the surface of the membrane.</text>
</comment>
<comment type="domain">
    <text evidence="1">Intact N-terminus is essential for virion morphogenesis. Possesses two apical sorting signals, one in the ectodomain, which is likely to be a glycan, and the other in the transmembrane domain. The transmembrane domain also plays a role in lipid raft association.</text>
</comment>
<comment type="PTM">
    <text evidence="1">N-glycosylated.</text>
</comment>
<comment type="miscellaneous">
    <text>The influenza A genome consist of 8 RNA segments. Genetic variation of hemagglutinin and/or neuraminidase genes results in the emergence of new influenza strains. The mechanism of variation can be the result of point mutations or the result of genetic reassortment between segments of two different strains.</text>
</comment>
<comment type="similarity">
    <text evidence="1">Belongs to the glycosyl hydrolase 34 family.</text>
</comment>
<organismHost>
    <name type="scientific">Aves</name>
    <dbReference type="NCBI Taxonomy" id="8782"/>
</organismHost>
<organismHost>
    <name type="scientific">Cetacea</name>
    <name type="common">whales</name>
    <dbReference type="NCBI Taxonomy" id="9721"/>
</organismHost>
<organismHost>
    <name type="scientific">Homo sapiens</name>
    <name type="common">Human</name>
    <dbReference type="NCBI Taxonomy" id="9606"/>
</organismHost>
<organismHost>
    <name type="scientific">Phocidae</name>
    <name type="common">true seals</name>
    <dbReference type="NCBI Taxonomy" id="9709"/>
</organismHost>
<organismHost>
    <name type="scientific">Sus scrofa</name>
    <name type="common">Pig</name>
    <dbReference type="NCBI Taxonomy" id="9823"/>
</organismHost>
<feature type="chain" id="PRO_0000078722" description="Neuraminidase">
    <location>
        <begin position="1"/>
        <end position="469"/>
    </location>
</feature>
<feature type="topological domain" description="Intravirion" evidence="1">
    <location>
        <begin position="1"/>
        <end position="6"/>
    </location>
</feature>
<feature type="transmembrane region" description="Helical" evidence="1">
    <location>
        <begin position="7"/>
        <end position="29"/>
    </location>
</feature>
<feature type="topological domain" description="Virion surface" evidence="1">
    <location>
        <begin position="30"/>
        <end position="469"/>
    </location>
</feature>
<feature type="region of interest" description="Involved in apical transport and lipid raft association" evidence="1">
    <location>
        <begin position="11"/>
        <end position="33"/>
    </location>
</feature>
<feature type="region of interest" description="Hypervariable stalk region" evidence="1">
    <location>
        <begin position="36"/>
        <end position="88"/>
    </location>
</feature>
<feature type="region of interest" description="Head of neuraminidase" evidence="1">
    <location>
        <begin position="91"/>
        <end position="469"/>
    </location>
</feature>
<feature type="active site" description="Proton donor/acceptor" evidence="1">
    <location>
        <position position="151"/>
    </location>
</feature>
<feature type="active site" description="Nucleophile" evidence="1">
    <location>
        <position position="406"/>
    </location>
</feature>
<feature type="binding site" evidence="1">
    <location>
        <position position="118"/>
    </location>
    <ligand>
        <name>substrate</name>
    </ligand>
</feature>
<feature type="binding site" evidence="1">
    <location>
        <position position="152"/>
    </location>
    <ligand>
        <name>substrate</name>
    </ligand>
</feature>
<feature type="binding site" evidence="1">
    <location>
        <begin position="276"/>
        <end position="277"/>
    </location>
    <ligand>
        <name>substrate</name>
    </ligand>
</feature>
<feature type="binding site" evidence="1">
    <location>
        <position position="292"/>
    </location>
    <ligand>
        <name>substrate</name>
    </ligand>
</feature>
<feature type="binding site" evidence="1">
    <location>
        <position position="293"/>
    </location>
    <ligand>
        <name>Ca(2+)</name>
        <dbReference type="ChEBI" id="CHEBI:29108"/>
    </ligand>
</feature>
<feature type="binding site" evidence="1">
    <location>
        <position position="297"/>
    </location>
    <ligand>
        <name>Ca(2+)</name>
        <dbReference type="ChEBI" id="CHEBI:29108"/>
    </ligand>
</feature>
<feature type="binding site" evidence="1">
    <location>
        <position position="324"/>
    </location>
    <ligand>
        <name>Ca(2+)</name>
        <dbReference type="ChEBI" id="CHEBI:29108"/>
    </ligand>
</feature>
<feature type="binding site" evidence="1">
    <location>
        <position position="371"/>
    </location>
    <ligand>
        <name>substrate</name>
    </ligand>
</feature>
<feature type="glycosylation site" description="N-linked (GlcNAc...) asparagine; by host" evidence="1">
    <location>
        <position position="61"/>
    </location>
</feature>
<feature type="glycosylation site" description="N-linked (GlcNAc...) asparagine; by host" evidence="1">
    <location>
        <position position="70"/>
    </location>
</feature>
<feature type="glycosylation site" description="N-linked (GlcNAc...) asparagine; by host" evidence="1">
    <location>
        <position position="86"/>
    </location>
</feature>
<feature type="glycosylation site" description="N-linked (GlcNAc...) asparagine; by host" evidence="1">
    <location>
        <position position="146"/>
    </location>
</feature>
<feature type="glycosylation site" description="N-linked (GlcNAc...) asparagine; by host" evidence="1">
    <location>
        <position position="200"/>
    </location>
</feature>
<feature type="glycosylation site" description="N-linked (GlcNAc...) asparagine; by host" evidence="1">
    <location>
        <position position="234"/>
    </location>
</feature>
<feature type="glycosylation site" description="N-linked (GlcNAc...) asparagine; by host" evidence="1">
    <location>
        <position position="402"/>
    </location>
</feature>
<feature type="disulfide bond" evidence="1">
    <location>
        <begin position="92"/>
        <end position="417"/>
    </location>
</feature>
<feature type="disulfide bond" evidence="1">
    <location>
        <begin position="124"/>
        <end position="129"/>
    </location>
</feature>
<feature type="disulfide bond" evidence="1">
    <location>
        <begin position="183"/>
        <end position="230"/>
    </location>
</feature>
<feature type="disulfide bond" evidence="1">
    <location>
        <begin position="232"/>
        <end position="237"/>
    </location>
</feature>
<feature type="disulfide bond" evidence="1">
    <location>
        <begin position="278"/>
        <end position="291"/>
    </location>
</feature>
<feature type="disulfide bond" evidence="1">
    <location>
        <begin position="280"/>
        <end position="289"/>
    </location>
</feature>
<feature type="disulfide bond" evidence="1">
    <location>
        <begin position="318"/>
        <end position="337"/>
    </location>
</feature>
<feature type="disulfide bond" evidence="1">
    <location>
        <begin position="421"/>
        <end position="447"/>
    </location>
</feature>
<reference key="1">
    <citation type="journal article" date="1982" name="Virology">
        <title>Sequence of the influenza A/Udorn/72 (H3N2) virus neuraminidase gene as determined from cloned full-length DNA.</title>
        <authorList>
            <person name="Markoff L."/>
            <person name="Lai C.-J."/>
        </authorList>
    </citation>
    <scope>NUCLEOTIDE SEQUENCE [GENOMIC RNA]</scope>
</reference>
<reference key="2">
    <citation type="journal article" date="2004" name="Virus Res.">
        <title>Assembly and budding of influenza virus.</title>
        <authorList>
            <person name="Nayak D.P."/>
            <person name="Hui E.K."/>
            <person name="Barman S."/>
        </authorList>
    </citation>
    <scope>REVIEW</scope>
</reference>
<reference key="3">
    <citation type="journal article" date="2005" name="N. Engl. J. Med.">
        <title>Neuraminidase inhibitors for influenza.</title>
        <authorList>
            <person name="Moscona A."/>
        </authorList>
    </citation>
    <scope>REVIEW</scope>
</reference>
<reference key="4">
    <citation type="journal article" date="2005" name="Biol. Pharm. Bull.">
        <title>Sialobiology of influenza: molecular mechanism of host range variation of influenza viruses.</title>
        <authorList>
            <person name="Suzuki Y."/>
        </authorList>
    </citation>
    <scope>REVIEW</scope>
</reference>
<evidence type="ECO:0000255" key="1">
    <source>
        <dbReference type="HAMAP-Rule" id="MF_04071"/>
    </source>
</evidence>
<protein>
    <recommendedName>
        <fullName evidence="1">Neuraminidase</fullName>
        <ecNumber evidence="1">3.2.1.18</ecNumber>
    </recommendedName>
</protein>
<gene>
    <name evidence="1" type="primary">NA</name>
</gene>
<organism>
    <name type="scientific">Influenza A virus (strain A/Udorn/1972 H3N2)</name>
    <dbReference type="NCBI Taxonomy" id="385599"/>
    <lineage>
        <taxon>Viruses</taxon>
        <taxon>Riboviria</taxon>
        <taxon>Orthornavirae</taxon>
        <taxon>Negarnaviricota</taxon>
        <taxon>Polyploviricotina</taxon>
        <taxon>Insthoviricetes</taxon>
        <taxon>Articulavirales</taxon>
        <taxon>Orthomyxoviridae</taxon>
        <taxon>Alphainfluenzavirus</taxon>
        <taxon>Alphainfluenzavirus influenzae</taxon>
        <taxon>Influenza A virus</taxon>
    </lineage>
</organism>
<name>NRAM_I72A8</name>
<keyword id="KW-0106">Calcium</keyword>
<keyword id="KW-1015">Disulfide bond</keyword>
<keyword id="KW-0325">Glycoprotein</keyword>
<keyword id="KW-0326">Glycosidase</keyword>
<keyword id="KW-1032">Host cell membrane</keyword>
<keyword id="KW-1043">Host membrane</keyword>
<keyword id="KW-0378">Hydrolase</keyword>
<keyword id="KW-0472">Membrane</keyword>
<keyword id="KW-0479">Metal-binding</keyword>
<keyword id="KW-0735">Signal-anchor</keyword>
<keyword id="KW-0812">Transmembrane</keyword>
<keyword id="KW-1133">Transmembrane helix</keyword>
<keyword id="KW-0946">Virion</keyword>
<proteinExistence type="inferred from homology"/>